<gene>
    <name evidence="6" type="primary">STU</name>
    <name evidence="8" type="ordered locus">At2g16750</name>
    <name evidence="9" type="ORF">T24I21.16</name>
</gene>
<proteinExistence type="evidence at transcript level"/>
<keyword id="KW-0025">Alternative splicing</keyword>
<keyword id="KW-0067">ATP-binding</keyword>
<keyword id="KW-0963">Cytoplasm</keyword>
<keyword id="KW-0939">Gibberellin signaling pathway</keyword>
<keyword id="KW-0378">Hydrolase</keyword>
<keyword id="KW-0418">Kinase</keyword>
<keyword id="KW-0547">Nucleotide-binding</keyword>
<keyword id="KW-0597">Phosphoprotein</keyword>
<keyword id="KW-1185">Reference proteome</keyword>
<keyword id="KW-0723">Serine/threonine-protein kinase</keyword>
<keyword id="KW-0808">Transferase</keyword>
<reference key="1">
    <citation type="journal article" date="1999" name="Nature">
        <title>Sequence and analysis of chromosome 2 of the plant Arabidopsis thaliana.</title>
        <authorList>
            <person name="Lin X."/>
            <person name="Kaul S."/>
            <person name="Rounsley S.D."/>
            <person name="Shea T.P."/>
            <person name="Benito M.-I."/>
            <person name="Town C.D."/>
            <person name="Fujii C.Y."/>
            <person name="Mason T.M."/>
            <person name="Bowman C.L."/>
            <person name="Barnstead M.E."/>
            <person name="Feldblyum T.V."/>
            <person name="Buell C.R."/>
            <person name="Ketchum K.A."/>
            <person name="Lee J.J."/>
            <person name="Ronning C.M."/>
            <person name="Koo H.L."/>
            <person name="Moffat K.S."/>
            <person name="Cronin L.A."/>
            <person name="Shen M."/>
            <person name="Pai G."/>
            <person name="Van Aken S."/>
            <person name="Umayam L."/>
            <person name="Tallon L.J."/>
            <person name="Gill J.E."/>
            <person name="Adams M.D."/>
            <person name="Carrera A.J."/>
            <person name="Creasy T.H."/>
            <person name="Goodman H.M."/>
            <person name="Somerville C.R."/>
            <person name="Copenhaver G.P."/>
            <person name="Preuss D."/>
            <person name="Nierman W.C."/>
            <person name="White O."/>
            <person name="Eisen J.A."/>
            <person name="Salzberg S.L."/>
            <person name="Fraser C.M."/>
            <person name="Venter J.C."/>
        </authorList>
    </citation>
    <scope>NUCLEOTIDE SEQUENCE [LARGE SCALE GENOMIC DNA]</scope>
    <source>
        <strain>cv. Columbia</strain>
    </source>
</reference>
<reference key="2">
    <citation type="journal article" date="2017" name="Plant J.">
        <title>Araport11: a complete reannotation of the Arabidopsis thaliana reference genome.</title>
        <authorList>
            <person name="Cheng C.Y."/>
            <person name="Krishnakumar V."/>
            <person name="Chan A.P."/>
            <person name="Thibaud-Nissen F."/>
            <person name="Schobel S."/>
            <person name="Town C.D."/>
        </authorList>
    </citation>
    <scope>GENOME REANNOTATION</scope>
    <source>
        <strain>cv. Columbia</strain>
    </source>
</reference>
<reference key="3">
    <citation type="submission" date="2004-09" db="EMBL/GenBank/DDBJ databases">
        <title>Large-scale analysis of RIKEN Arabidopsis full-length (RAFL) cDNAs.</title>
        <authorList>
            <person name="Totoki Y."/>
            <person name="Seki M."/>
            <person name="Ishida J."/>
            <person name="Nakajima M."/>
            <person name="Enju A."/>
            <person name="Kamiya A."/>
            <person name="Narusaka M."/>
            <person name="Shin-i T."/>
            <person name="Nakagawa M."/>
            <person name="Sakamoto N."/>
            <person name="Oishi K."/>
            <person name="Kohara Y."/>
            <person name="Kobayashi M."/>
            <person name="Toyoda A."/>
            <person name="Sakaki Y."/>
            <person name="Sakurai T."/>
            <person name="Iida K."/>
            <person name="Akiyama K."/>
            <person name="Satou M."/>
            <person name="Toyoda T."/>
            <person name="Konagaya A."/>
            <person name="Carninci P."/>
            <person name="Kawai J."/>
            <person name="Hayashizaki Y."/>
            <person name="Shinozaki K."/>
        </authorList>
    </citation>
    <scope>NUCLEOTIDE SEQUENCE [LARGE SCALE MRNA] (ISOFORM 2)</scope>
    <source>
        <strain>cv. Columbia</strain>
    </source>
</reference>
<reference key="4">
    <citation type="submission" date="2008-10" db="EMBL/GenBank/DDBJ databases">
        <title>Arabidopsis ORF clones.</title>
        <authorList>
            <person name="de los Reyes C."/>
            <person name="Quan R."/>
            <person name="Chen H."/>
            <person name="Bautista V."/>
            <person name="Kim C.J."/>
            <person name="Ecker J.R."/>
        </authorList>
    </citation>
    <scope>NUCLEOTIDE SEQUENCE [LARGE SCALE MRNA] (ISOFORM 1)</scope>
    <source>
        <strain>cv. Columbia</strain>
    </source>
</reference>
<reference key="5">
    <citation type="journal article" date="2012" name="Development">
        <title>STUNTED mediates the control of cell proliferation by GA in Arabidopsis.</title>
        <authorList>
            <person name="Lee L.Y.C."/>
            <person name="Hou X."/>
            <person name="Fang L."/>
            <person name="Fan S."/>
            <person name="Kumar P.P."/>
            <person name="Yu H."/>
        </authorList>
    </citation>
    <scope>FUNCTION</scope>
    <scope>DISRUPTION PHENOTYPE</scope>
    <scope>TISSUE SPECIFICITY</scope>
    <scope>DEVELOPMENTAL STAGE</scope>
    <scope>INDUCTION BY GIBBERELLINS</scope>
    <scope>REPRESSION BY RGA</scope>
    <scope>SUBCELLULAR LOCATION</scope>
    <source>
        <strain>cv. Columbia</strain>
        <strain>cv. Landsberg erecta</strain>
    </source>
</reference>
<accession>B5X4Z9</accession>
<accession>A0A178VX47</accession>
<accession>Q67Z29</accession>
<accession>Q9SLE3</accession>
<dbReference type="EC" id="2.7.11.-" evidence="2"/>
<dbReference type="EMBL" id="AC005825">
    <property type="protein sequence ID" value="AAD24608.1"/>
    <property type="status" value="ALT_SEQ"/>
    <property type="molecule type" value="Genomic_DNA"/>
</dbReference>
<dbReference type="EMBL" id="CP002685">
    <property type="protein sequence ID" value="AEC06534.1"/>
    <property type="molecule type" value="Genomic_DNA"/>
</dbReference>
<dbReference type="EMBL" id="CP002685">
    <property type="protein sequence ID" value="ANM61982.1"/>
    <property type="molecule type" value="Genomic_DNA"/>
</dbReference>
<dbReference type="EMBL" id="AK176289">
    <property type="protein sequence ID" value="BAD44052.1"/>
    <property type="molecule type" value="mRNA"/>
</dbReference>
<dbReference type="EMBL" id="BT046118">
    <property type="protein sequence ID" value="ACI46506.1"/>
    <property type="molecule type" value="mRNA"/>
</dbReference>
<dbReference type="PIR" id="G84543">
    <property type="entry name" value="G84543"/>
</dbReference>
<dbReference type="RefSeq" id="NP_001318232.1">
    <molecule id="B5X4Z9-1"/>
    <property type="nucleotide sequence ID" value="NM_001335488.1"/>
</dbReference>
<dbReference type="RefSeq" id="NP_179266.2">
    <molecule id="B5X4Z9-1"/>
    <property type="nucleotide sequence ID" value="NM_127227.6"/>
</dbReference>
<dbReference type="SMR" id="B5X4Z9"/>
<dbReference type="FunCoup" id="B5X4Z9">
    <property type="interactions" value="202"/>
</dbReference>
<dbReference type="STRING" id="3702.B5X4Z9"/>
<dbReference type="iPTMnet" id="B5X4Z9"/>
<dbReference type="PaxDb" id="3702-AT2G16750.1"/>
<dbReference type="ProteomicsDB" id="181274"/>
<dbReference type="EnsemblPlants" id="AT2G16750.1">
    <molecule id="B5X4Z9-1"/>
    <property type="protein sequence ID" value="AT2G16750.1"/>
    <property type="gene ID" value="AT2G16750"/>
</dbReference>
<dbReference type="EnsemblPlants" id="AT2G16750.2">
    <molecule id="B5X4Z9-1"/>
    <property type="protein sequence ID" value="AT2G16750.2"/>
    <property type="gene ID" value="AT2G16750"/>
</dbReference>
<dbReference type="GeneID" id="816176"/>
<dbReference type="Gramene" id="AT2G16750.1">
    <molecule id="B5X4Z9-1"/>
    <property type="protein sequence ID" value="AT2G16750.1"/>
    <property type="gene ID" value="AT2G16750"/>
</dbReference>
<dbReference type="Gramene" id="AT2G16750.2">
    <molecule id="B5X4Z9-1"/>
    <property type="protein sequence ID" value="AT2G16750.2"/>
    <property type="gene ID" value="AT2G16750"/>
</dbReference>
<dbReference type="KEGG" id="ath:AT2G16750"/>
<dbReference type="Araport" id="AT2G16750"/>
<dbReference type="TAIR" id="AT2G16750"/>
<dbReference type="eggNOG" id="KOG1187">
    <property type="taxonomic scope" value="Eukaryota"/>
</dbReference>
<dbReference type="HOGENOM" id="CLU_000288_155_2_1"/>
<dbReference type="InParanoid" id="B5X4Z9"/>
<dbReference type="OMA" id="CRWFSHE"/>
<dbReference type="OrthoDB" id="654677at2759"/>
<dbReference type="PhylomeDB" id="B5X4Z9"/>
<dbReference type="PRO" id="PR:B5X4Z9"/>
<dbReference type="Proteomes" id="UP000006548">
    <property type="component" value="Chromosome 2"/>
</dbReference>
<dbReference type="ExpressionAtlas" id="B5X4Z9">
    <property type="expression patterns" value="baseline and differential"/>
</dbReference>
<dbReference type="GO" id="GO:0005737">
    <property type="term" value="C:cytoplasm"/>
    <property type="evidence" value="ECO:0000314"/>
    <property type="project" value="UniProtKB"/>
</dbReference>
<dbReference type="GO" id="GO:0005524">
    <property type="term" value="F:ATP binding"/>
    <property type="evidence" value="ECO:0007669"/>
    <property type="project" value="UniProtKB-KW"/>
</dbReference>
<dbReference type="GO" id="GO:0016787">
    <property type="term" value="F:hydrolase activity"/>
    <property type="evidence" value="ECO:0007669"/>
    <property type="project" value="UniProtKB-KW"/>
</dbReference>
<dbReference type="GO" id="GO:0004674">
    <property type="term" value="F:protein serine/threonine kinase activity"/>
    <property type="evidence" value="ECO:0007669"/>
    <property type="project" value="UniProtKB-KW"/>
</dbReference>
<dbReference type="GO" id="GO:0009740">
    <property type="term" value="P:gibberellic acid mediated signaling pathway"/>
    <property type="evidence" value="ECO:0007669"/>
    <property type="project" value="UniProtKB-KW"/>
</dbReference>
<dbReference type="GO" id="GO:0010476">
    <property type="term" value="P:gibberellin mediated signaling pathway"/>
    <property type="evidence" value="ECO:0000315"/>
    <property type="project" value="UniProtKB"/>
</dbReference>
<dbReference type="GO" id="GO:0051781">
    <property type="term" value="P:positive regulation of cell division"/>
    <property type="evidence" value="ECO:0000315"/>
    <property type="project" value="UniProtKB"/>
</dbReference>
<dbReference type="GO" id="GO:0009739">
    <property type="term" value="P:response to gibberellin"/>
    <property type="evidence" value="ECO:0000270"/>
    <property type="project" value="UniProtKB"/>
</dbReference>
<dbReference type="CDD" id="cd00293">
    <property type="entry name" value="USP-like"/>
    <property type="match status" value="1"/>
</dbReference>
<dbReference type="FunFam" id="3.30.200.20:FF:000268">
    <property type="entry name" value="probable receptor-like serine/threonine-protein kinase At5g57670"/>
    <property type="match status" value="1"/>
</dbReference>
<dbReference type="FunFam" id="1.10.510.10:FF:000284">
    <property type="entry name" value="Putative receptor-like serine/threonine-protein kinase"/>
    <property type="match status" value="1"/>
</dbReference>
<dbReference type="Gene3D" id="3.40.50.620">
    <property type="entry name" value="HUPs"/>
    <property type="match status" value="1"/>
</dbReference>
<dbReference type="Gene3D" id="3.30.200.20">
    <property type="entry name" value="Phosphorylase Kinase, domain 1"/>
    <property type="match status" value="1"/>
</dbReference>
<dbReference type="Gene3D" id="1.10.510.10">
    <property type="entry name" value="Transferase(Phosphotransferase) domain 1"/>
    <property type="match status" value="1"/>
</dbReference>
<dbReference type="InterPro" id="IPR011009">
    <property type="entry name" value="Kinase-like_dom_sf"/>
</dbReference>
<dbReference type="InterPro" id="IPR000719">
    <property type="entry name" value="Prot_kinase_dom"/>
</dbReference>
<dbReference type="InterPro" id="IPR046958">
    <property type="entry name" value="RBK1/2/STUNTED"/>
</dbReference>
<dbReference type="InterPro" id="IPR014729">
    <property type="entry name" value="Rossmann-like_a/b/a_fold"/>
</dbReference>
<dbReference type="InterPro" id="IPR008271">
    <property type="entry name" value="Ser/Thr_kinase_AS"/>
</dbReference>
<dbReference type="PANTHER" id="PTHR47987">
    <property type="entry name" value="OS08G0249100 PROTEIN"/>
    <property type="match status" value="1"/>
</dbReference>
<dbReference type="PANTHER" id="PTHR47987:SF11">
    <property type="entry name" value="RECEPTOR-LIKE CYTOSOLIC SERINE_THREONINE-PROTEIN KINASE RBK1 ISOFORM X1"/>
    <property type="match status" value="1"/>
</dbReference>
<dbReference type="Pfam" id="PF00069">
    <property type="entry name" value="Pkinase"/>
    <property type="match status" value="1"/>
</dbReference>
<dbReference type="SMART" id="SM00220">
    <property type="entry name" value="S_TKc"/>
    <property type="match status" value="1"/>
</dbReference>
<dbReference type="SUPFAM" id="SSF52402">
    <property type="entry name" value="Adenine nucleotide alpha hydrolases-like"/>
    <property type="match status" value="1"/>
</dbReference>
<dbReference type="SUPFAM" id="SSF56112">
    <property type="entry name" value="Protein kinase-like (PK-like)"/>
    <property type="match status" value="1"/>
</dbReference>
<dbReference type="PROSITE" id="PS50011">
    <property type="entry name" value="PROTEIN_KINASE_DOM"/>
    <property type="match status" value="1"/>
</dbReference>
<dbReference type="PROSITE" id="PS00108">
    <property type="entry name" value="PROTEIN_KINASE_ST"/>
    <property type="match status" value="1"/>
</dbReference>
<comment type="function">
    <text evidence="5">Promotes cell proliferation in the gibberellic acid (GA) signaling pathway, acting downstream of RGA, and possibly through a negative regulation of two cyclin-dependent kinase inhibitors SIM and SMR1.</text>
</comment>
<comment type="subcellular location">
    <subcellularLocation>
        <location evidence="5">Cytoplasm</location>
    </subcellularLocation>
</comment>
<comment type="alternative products">
    <event type="alternative splicing"/>
    <isoform>
        <id>B5X4Z9-1</id>
        <name>1</name>
        <sequence type="displayed"/>
    </isoform>
    <isoform>
        <id>B5X4Z9-2</id>
        <name>2</name>
        <sequence type="described" ref="VSP_061267"/>
    </isoform>
</comment>
<comment type="tissue specificity">
    <text evidence="5">Expressed ubiquitously, mostly in roots, to a lower extent in leaves, floral buds and stems, and, at low levels, in flowers and siliques.</text>
</comment>
<comment type="developmental stage">
    <text evidence="5">In young seedlings, observed in shoot apices and roots and accumulates gradually in the leaf vasculature (PubMed:22492352). Later expressed in inflorescence apices, especially in the center, and in secondary inflorescence meristems (PubMed:22492352). In floral buds and flowers, strongly present in anthers (specifically in the tapetum), ovules and pollen (PubMed:22492352).</text>
</comment>
<comment type="induction">
    <text evidence="5">Induced by gibberellins (GA) in seedlings shoot apices, in tissues containing actively dividing cells (PubMed:22492352). Down-regulated by RGA in the GA signaling pathway (PubMed:22492352).</text>
</comment>
<comment type="domain">
    <text evidence="2">The protein kinase domain is predicted to be catalytically inactive.</text>
</comment>
<comment type="disruption phenotype">
    <text evidence="5">General retarded growth with small curled leaves and short roots in seedlings, as well as delayed floral transition and lower fertility; these phenotypes are partly due to a reduced cell proliferation.</text>
</comment>
<comment type="similarity">
    <text evidence="2">Belongs to the protein kinase superfamily. Ser/Thr protein kinase family.</text>
</comment>
<comment type="sequence caution" evidence="7">
    <conflict type="erroneous gene model prediction">
        <sequence resource="EMBL-CDS" id="AAD24608"/>
    </conflict>
</comment>
<name>STU_ARATH</name>
<sequence length="617" mass="68877">MAVDKVIVKQRNIILVGIPIDESGVEVLKWALEEVAKHGDCVVVVHVCFTYYRALKSKSSLDRYLKPYIEFCSTKKIELKGEVLKGNSVLGVLVKEAKRYNAMSVVVGVKQQSKLSLKIAKGCAKELPSTTDILAIHRGNIVFRRSNHYQLPLAQKISSRPSSELSEGFSDKDLAKTTGQEKRKISGRSLSLPSVEVVDQTPGWPLLRTSTLATPMVQHQTRKISVVNWVMSLPERFPHHPNQTCQQSFCDKQLKDILKDINRWFSYDVLKTATSDFSLENLIGKGGCNEVYKGFLEDGKGVAVKILKPSVKEAVKEFVHEVSIVSSLSHSNISPLIGVCVHYNDLISVYNLSSKGSLEETLQGKHVLRWEERLKIAIGLGEALDYLHNQCSNPVIHRDVKSSNVLLSDEFEPQLSDFGLSMWGSKSCRYTIQRDVVGTFGYLAPEYFMYGKVSDKVDVYAFGVVLLELISGRTSISSDSPRGQESLVMWAKPMIEKGNAKELLDPNIAGTFDEDQFHKMVLAATHCLTRAATYRPNIKEILKLLRGEDDVSKWVKIEEDDEDGFDDEVYPNSNTELHLSLAMVDVEDNDSVSNSSLERSNNSLFSSSSSSSQELQS</sequence>
<feature type="chain" id="PRO_0000454232" description="Protein kinase STUNTED">
    <location>
        <begin position="1"/>
        <end position="617"/>
    </location>
</feature>
<feature type="domain" description="Protein kinase" evidence="2">
    <location>
        <begin position="277"/>
        <end position="555"/>
    </location>
</feature>
<feature type="region of interest" description="Disordered" evidence="4">
    <location>
        <begin position="162"/>
        <end position="187"/>
    </location>
</feature>
<feature type="region of interest" description="Disordered" evidence="4">
    <location>
        <begin position="590"/>
        <end position="617"/>
    </location>
</feature>
<feature type="compositionally biased region" description="Basic and acidic residues" evidence="4">
    <location>
        <begin position="169"/>
        <end position="184"/>
    </location>
</feature>
<feature type="compositionally biased region" description="Low complexity" evidence="4">
    <location>
        <begin position="591"/>
        <end position="617"/>
    </location>
</feature>
<feature type="active site" description="Proton acceptor" evidence="2 3">
    <location>
        <position position="399"/>
    </location>
</feature>
<feature type="binding site" evidence="2">
    <location>
        <begin position="283"/>
        <end position="291"/>
    </location>
    <ligand>
        <name>ATP</name>
        <dbReference type="ChEBI" id="CHEBI:30616"/>
    </ligand>
</feature>
<feature type="binding site" evidence="2">
    <location>
        <position position="305"/>
    </location>
    <ligand>
        <name>ATP</name>
        <dbReference type="ChEBI" id="CHEBI:30616"/>
    </ligand>
</feature>
<feature type="modified residue" description="Phosphotyrosine" evidence="1">
    <location>
        <position position="350"/>
    </location>
</feature>
<feature type="modified residue" description="Phosphoserine" evidence="1">
    <location>
        <position position="403"/>
    </location>
</feature>
<feature type="modified residue" description="Phosphothreonine" evidence="1">
    <location>
        <position position="439"/>
    </location>
</feature>
<feature type="modified residue" description="Phosphotyrosine" evidence="1">
    <location>
        <position position="447"/>
    </location>
</feature>
<feature type="splice variant" id="VSP_061267" description="In isoform 2.">
    <location>
        <begin position="1"/>
        <end position="493"/>
    </location>
</feature>
<evidence type="ECO:0000250" key="1">
    <source>
        <dbReference type="UniProtKB" id="O48814"/>
    </source>
</evidence>
<evidence type="ECO:0000255" key="2">
    <source>
        <dbReference type="PROSITE-ProRule" id="PRU00159"/>
    </source>
</evidence>
<evidence type="ECO:0000255" key="3">
    <source>
        <dbReference type="PROSITE-ProRule" id="PRU10028"/>
    </source>
</evidence>
<evidence type="ECO:0000256" key="4">
    <source>
        <dbReference type="SAM" id="MobiDB-lite"/>
    </source>
</evidence>
<evidence type="ECO:0000269" key="5">
    <source>
    </source>
</evidence>
<evidence type="ECO:0000303" key="6">
    <source>
    </source>
</evidence>
<evidence type="ECO:0000305" key="7"/>
<evidence type="ECO:0000312" key="8">
    <source>
        <dbReference type="Araport" id="AT2G16750"/>
    </source>
</evidence>
<evidence type="ECO:0000312" key="9">
    <source>
        <dbReference type="EMBL" id="AAD24608.1"/>
    </source>
</evidence>
<protein>
    <recommendedName>
        <fullName evidence="6">Protein kinase STUNTED</fullName>
        <ecNumber evidence="2">2.7.11.-</ecNumber>
    </recommendedName>
</protein>
<organism>
    <name type="scientific">Arabidopsis thaliana</name>
    <name type="common">Mouse-ear cress</name>
    <dbReference type="NCBI Taxonomy" id="3702"/>
    <lineage>
        <taxon>Eukaryota</taxon>
        <taxon>Viridiplantae</taxon>
        <taxon>Streptophyta</taxon>
        <taxon>Embryophyta</taxon>
        <taxon>Tracheophyta</taxon>
        <taxon>Spermatophyta</taxon>
        <taxon>Magnoliopsida</taxon>
        <taxon>eudicotyledons</taxon>
        <taxon>Gunneridae</taxon>
        <taxon>Pentapetalae</taxon>
        <taxon>rosids</taxon>
        <taxon>malvids</taxon>
        <taxon>Brassicales</taxon>
        <taxon>Brassicaceae</taxon>
        <taxon>Camelineae</taxon>
        <taxon>Arabidopsis</taxon>
    </lineage>
</organism>